<protein>
    <recommendedName>
        <fullName evidence="1">Adenylate kinase</fullName>
        <ecNumber evidence="1">2.7.4.3</ecNumber>
    </recommendedName>
    <alternativeName>
        <fullName evidence="1">ATP-AMP transphosphorylase</fullName>
    </alternativeName>
    <alternativeName>
        <fullName evidence="1">ATP:AMP phosphotransferase</fullName>
    </alternativeName>
    <alternativeName>
        <fullName evidence="1">Adenylate kinase cytosolic and mitochondrial</fullName>
    </alternativeName>
    <alternativeName>
        <fullName evidence="1">Adenylate monophosphate kinase</fullName>
    </alternativeName>
</protein>
<comment type="function">
    <text evidence="1">Catalyzes the reversible transfer of the terminal phosphate group between ATP and AMP. Plays an important role in cellular energy homeostasis and in adenine nucleotide metabolism. Adenylate kinase activity is critical for regulation of the phosphate utilization and the AMP de novo biosynthesis pathways.</text>
</comment>
<comment type="catalytic activity">
    <reaction evidence="1">
        <text>AMP + ATP = 2 ADP</text>
        <dbReference type="Rhea" id="RHEA:12973"/>
        <dbReference type="ChEBI" id="CHEBI:30616"/>
        <dbReference type="ChEBI" id="CHEBI:456215"/>
        <dbReference type="ChEBI" id="CHEBI:456216"/>
        <dbReference type="EC" id="2.7.4.3"/>
    </reaction>
</comment>
<comment type="subunit">
    <text evidence="1">Monomer.</text>
</comment>
<comment type="subcellular location">
    <subcellularLocation>
        <location evidence="1">Cytoplasm</location>
        <location evidence="1">Cytosol</location>
    </subcellularLocation>
    <subcellularLocation>
        <location evidence="1">Mitochondrion intermembrane space</location>
    </subcellularLocation>
    <text evidence="1">Predominantly mitochondrial.</text>
</comment>
<comment type="domain">
    <text evidence="1">Consists of three domains, a large central CORE domain and two small peripheral domains, NMPbind and LID, which undergo movements during catalysis. The LID domain closes over the site of phosphoryl transfer upon ATP binding. Assembling and dissambling the active center during each catalytic cycle provides an effective means to prevent ATP hydrolysis.</text>
</comment>
<comment type="similarity">
    <text evidence="1">Belongs to the adenylate kinase family. AK2 subfamily.</text>
</comment>
<proteinExistence type="inferred from homology"/>
<name>KAD2_DROYA</name>
<accession>B4PAR6</accession>
<gene>
    <name evidence="1" type="primary">Adk2</name>
    <name type="ORF">GE14359</name>
</gene>
<sequence length="240" mass="26513">MAPNAAVPVERYEPQNIGINAILLGPPGSGKGTQAPLLKEKFCVCHLSTGDMLRAEISSGSKLGAELKKVMDAGKLVSDELVVDMIDSNLDKPECKNGFLLDGFPRTVVQAEKLDTLLDKRKTNLDAVIEFAIDDSLLVRRITGRLIHQASGRSYHEEFAPPKKPMTDDVTGEPLIRRSDDNAEALKKRLEAYHKQTKPLVDYYGLRGLHFKVDAAKKSSDVFSTIDSIFQNKRPAQIQL</sequence>
<keyword id="KW-0067">ATP-binding</keyword>
<keyword id="KW-0963">Cytoplasm</keyword>
<keyword id="KW-0418">Kinase</keyword>
<keyword id="KW-0496">Mitochondrion</keyword>
<keyword id="KW-0547">Nucleotide-binding</keyword>
<keyword id="KW-0597">Phosphoprotein</keyword>
<keyword id="KW-0808">Transferase</keyword>
<feature type="chain" id="PRO_0000365713" description="Adenylate kinase">
    <location>
        <begin position="1"/>
        <end position="240"/>
    </location>
</feature>
<feature type="region of interest" description="NMP" evidence="1">
    <location>
        <begin position="48"/>
        <end position="77"/>
    </location>
</feature>
<feature type="region of interest" description="LID" evidence="1">
    <location>
        <begin position="144"/>
        <end position="181"/>
    </location>
</feature>
<feature type="binding site" evidence="1">
    <location>
        <begin position="28"/>
        <end position="33"/>
    </location>
    <ligand>
        <name>ATP</name>
        <dbReference type="ChEBI" id="CHEBI:30616"/>
    </ligand>
</feature>
<feature type="binding site" evidence="1">
    <location>
        <position position="49"/>
    </location>
    <ligand>
        <name>AMP</name>
        <dbReference type="ChEBI" id="CHEBI:456215"/>
    </ligand>
</feature>
<feature type="binding site" evidence="1">
    <location>
        <position position="54"/>
    </location>
    <ligand>
        <name>AMP</name>
        <dbReference type="ChEBI" id="CHEBI:456215"/>
    </ligand>
</feature>
<feature type="binding site" evidence="1">
    <location>
        <begin position="75"/>
        <end position="77"/>
    </location>
    <ligand>
        <name>AMP</name>
        <dbReference type="ChEBI" id="CHEBI:456215"/>
    </ligand>
</feature>
<feature type="binding site" evidence="1">
    <location>
        <begin position="103"/>
        <end position="106"/>
    </location>
    <ligand>
        <name>AMP</name>
        <dbReference type="ChEBI" id="CHEBI:456215"/>
    </ligand>
</feature>
<feature type="binding site" evidence="1">
    <location>
        <position position="110"/>
    </location>
    <ligand>
        <name>AMP</name>
        <dbReference type="ChEBI" id="CHEBI:456215"/>
    </ligand>
</feature>
<feature type="binding site" evidence="1">
    <location>
        <position position="145"/>
    </location>
    <ligand>
        <name>ATP</name>
        <dbReference type="ChEBI" id="CHEBI:30616"/>
    </ligand>
</feature>
<feature type="binding site" evidence="1">
    <location>
        <begin position="154"/>
        <end position="155"/>
    </location>
    <ligand>
        <name>ATP</name>
        <dbReference type="ChEBI" id="CHEBI:30616"/>
    </ligand>
</feature>
<feature type="binding site" evidence="1">
    <location>
        <position position="178"/>
    </location>
    <ligand>
        <name>AMP</name>
        <dbReference type="ChEBI" id="CHEBI:456215"/>
    </ligand>
</feature>
<feature type="binding site" evidence="1">
    <location>
        <position position="189"/>
    </location>
    <ligand>
        <name>AMP</name>
        <dbReference type="ChEBI" id="CHEBI:456215"/>
    </ligand>
</feature>
<feature type="binding site" evidence="1">
    <location>
        <position position="217"/>
    </location>
    <ligand>
        <name>ATP</name>
        <dbReference type="ChEBI" id="CHEBI:30616"/>
    </ligand>
</feature>
<evidence type="ECO:0000255" key="1">
    <source>
        <dbReference type="HAMAP-Rule" id="MF_03168"/>
    </source>
</evidence>
<dbReference type="EC" id="2.7.4.3" evidence="1"/>
<dbReference type="EMBL" id="CM000158">
    <property type="protein sequence ID" value="EDW92456.1"/>
    <property type="molecule type" value="Genomic_DNA"/>
</dbReference>
<dbReference type="SMR" id="B4PAR6"/>
<dbReference type="EnsemblMetazoa" id="FBtr0260877">
    <property type="protein sequence ID" value="FBpp0259369"/>
    <property type="gene ID" value="FBgn0231971"/>
</dbReference>
<dbReference type="EnsemblMetazoa" id="XM_002092708.4">
    <property type="protein sequence ID" value="XP_002092744.1"/>
    <property type="gene ID" value="LOC6531958"/>
</dbReference>
<dbReference type="GeneID" id="6531958"/>
<dbReference type="KEGG" id="dya:Dyak_GE14359"/>
<dbReference type="CTD" id="204"/>
<dbReference type="eggNOG" id="KOG3078">
    <property type="taxonomic scope" value="Eukaryota"/>
</dbReference>
<dbReference type="HOGENOM" id="CLU_032354_1_0_1"/>
<dbReference type="OMA" id="HYKVDAA"/>
<dbReference type="OrthoDB" id="439792at2759"/>
<dbReference type="PhylomeDB" id="B4PAR6"/>
<dbReference type="Proteomes" id="UP000002282">
    <property type="component" value="Chromosome 2R"/>
</dbReference>
<dbReference type="GO" id="GO:0005829">
    <property type="term" value="C:cytosol"/>
    <property type="evidence" value="ECO:0007669"/>
    <property type="project" value="UniProtKB-SubCell"/>
</dbReference>
<dbReference type="GO" id="GO:0005758">
    <property type="term" value="C:mitochondrial intermembrane space"/>
    <property type="evidence" value="ECO:0007669"/>
    <property type="project" value="UniProtKB-SubCell"/>
</dbReference>
<dbReference type="GO" id="GO:0004017">
    <property type="term" value="F:adenylate kinase activity"/>
    <property type="evidence" value="ECO:0007669"/>
    <property type="project" value="UniProtKB-UniRule"/>
</dbReference>
<dbReference type="GO" id="GO:0005524">
    <property type="term" value="F:ATP binding"/>
    <property type="evidence" value="ECO:0007669"/>
    <property type="project" value="UniProtKB-KW"/>
</dbReference>
<dbReference type="GO" id="GO:0006172">
    <property type="term" value="P:ADP biosynthetic process"/>
    <property type="evidence" value="ECO:0007669"/>
    <property type="project" value="UniProtKB-UniRule"/>
</dbReference>
<dbReference type="GO" id="GO:0046033">
    <property type="term" value="P:AMP metabolic process"/>
    <property type="evidence" value="ECO:0007669"/>
    <property type="project" value="UniProtKB-UniRule"/>
</dbReference>
<dbReference type="GO" id="GO:0046034">
    <property type="term" value="P:ATP metabolic process"/>
    <property type="evidence" value="ECO:0007669"/>
    <property type="project" value="UniProtKB-UniRule"/>
</dbReference>
<dbReference type="CDD" id="cd01428">
    <property type="entry name" value="ADK"/>
    <property type="match status" value="1"/>
</dbReference>
<dbReference type="FunFam" id="3.40.50.300:FF:000106">
    <property type="entry name" value="Adenylate kinase mitochondrial"/>
    <property type="match status" value="1"/>
</dbReference>
<dbReference type="Gene3D" id="3.40.50.300">
    <property type="entry name" value="P-loop containing nucleotide triphosphate hydrolases"/>
    <property type="match status" value="1"/>
</dbReference>
<dbReference type="HAMAP" id="MF_00235">
    <property type="entry name" value="Adenylate_kinase_Adk"/>
    <property type="match status" value="1"/>
</dbReference>
<dbReference type="HAMAP" id="MF_03168">
    <property type="entry name" value="Adenylate_kinase_AK2"/>
    <property type="match status" value="1"/>
</dbReference>
<dbReference type="InterPro" id="IPR006259">
    <property type="entry name" value="Adenyl_kin_sub"/>
</dbReference>
<dbReference type="InterPro" id="IPR000850">
    <property type="entry name" value="Adenylat/UMP-CMP_kin"/>
</dbReference>
<dbReference type="InterPro" id="IPR033690">
    <property type="entry name" value="Adenylat_kinase_CS"/>
</dbReference>
<dbReference type="InterPro" id="IPR007862">
    <property type="entry name" value="Adenylate_kinase_lid-dom"/>
</dbReference>
<dbReference type="InterPro" id="IPR028587">
    <property type="entry name" value="AK2"/>
</dbReference>
<dbReference type="InterPro" id="IPR027417">
    <property type="entry name" value="P-loop_NTPase"/>
</dbReference>
<dbReference type="NCBIfam" id="TIGR01351">
    <property type="entry name" value="adk"/>
    <property type="match status" value="1"/>
</dbReference>
<dbReference type="NCBIfam" id="NF001380">
    <property type="entry name" value="PRK00279.1-2"/>
    <property type="match status" value="1"/>
</dbReference>
<dbReference type="NCBIfam" id="NF001381">
    <property type="entry name" value="PRK00279.1-3"/>
    <property type="match status" value="1"/>
</dbReference>
<dbReference type="NCBIfam" id="NF011100">
    <property type="entry name" value="PRK14527.1"/>
    <property type="match status" value="1"/>
</dbReference>
<dbReference type="PANTHER" id="PTHR23359">
    <property type="entry name" value="NUCLEOTIDE KINASE"/>
    <property type="match status" value="1"/>
</dbReference>
<dbReference type="Pfam" id="PF00406">
    <property type="entry name" value="ADK"/>
    <property type="match status" value="1"/>
</dbReference>
<dbReference type="Pfam" id="PF05191">
    <property type="entry name" value="ADK_lid"/>
    <property type="match status" value="1"/>
</dbReference>
<dbReference type="PRINTS" id="PR00094">
    <property type="entry name" value="ADENYLTKNASE"/>
</dbReference>
<dbReference type="SUPFAM" id="SSF52540">
    <property type="entry name" value="P-loop containing nucleoside triphosphate hydrolases"/>
    <property type="match status" value="1"/>
</dbReference>
<dbReference type="PROSITE" id="PS00113">
    <property type="entry name" value="ADENYLATE_KINASE"/>
    <property type="match status" value="1"/>
</dbReference>
<reference key="1">
    <citation type="journal article" date="2007" name="Nature">
        <title>Evolution of genes and genomes on the Drosophila phylogeny.</title>
        <authorList>
            <consortium name="Drosophila 12 genomes consortium"/>
        </authorList>
    </citation>
    <scope>NUCLEOTIDE SEQUENCE [LARGE SCALE GENOMIC DNA]</scope>
    <source>
        <strain>Tai18E2 / Tucson 14021-0261.01</strain>
    </source>
</reference>
<organism>
    <name type="scientific">Drosophila yakuba</name>
    <name type="common">Fruit fly</name>
    <dbReference type="NCBI Taxonomy" id="7245"/>
    <lineage>
        <taxon>Eukaryota</taxon>
        <taxon>Metazoa</taxon>
        <taxon>Ecdysozoa</taxon>
        <taxon>Arthropoda</taxon>
        <taxon>Hexapoda</taxon>
        <taxon>Insecta</taxon>
        <taxon>Pterygota</taxon>
        <taxon>Neoptera</taxon>
        <taxon>Endopterygota</taxon>
        <taxon>Diptera</taxon>
        <taxon>Brachycera</taxon>
        <taxon>Muscomorpha</taxon>
        <taxon>Ephydroidea</taxon>
        <taxon>Drosophilidae</taxon>
        <taxon>Drosophila</taxon>
        <taxon>Sophophora</taxon>
    </lineage>
</organism>